<proteinExistence type="inferred from homology"/>
<comment type="function">
    <text evidence="1">Responsible for the transport of dicarboxylates such as succinate, fumarate, and malate from the periplasm across the membrane.</text>
</comment>
<comment type="subcellular location">
    <subcellularLocation>
        <location evidence="1">Cell inner membrane</location>
        <topology evidence="1">Multi-pass membrane protein</topology>
    </subcellularLocation>
</comment>
<comment type="similarity">
    <text evidence="1">Belongs to the dicarboxylate/amino acid:cation symporter (DAACS) (TC 2.A.23) family.</text>
</comment>
<sequence length="443" mass="46820">MTTRQPLYKSLYFQVIVAIAIGILLGHFYPQTGVALKPLGDGFIKLIKMVIAPIIFCTVVSGIAGMQNMKSVGKTGGYALLYFEIVSTIALLIGLIVVNVVQPGAGMHIDASTLDASKVAAYVTAGNDQSIVGFILNIIPATIVGAFANGDILQVLMFSVVFGFALHRLGAYGKPVLDFIDRFAHVMFNIINMIMKLAPLGALGAMAFTIGAYGVGSLVQLGQLMICFYITCVVFVLVVLGAICRAHGFSVIKLIRYIREELLIVLGTSSSESALPRMLIKMERLGAKKSVVGLVIPTGYSFNLDGTSIYLTMAAVFIAQATDTHMDITHQITLLLVLLLSSKGAAGVTGSGFIVLAATLSAVGHLPVAGLALILGIDRFMSEARALTNLVGNAVATVVVAKWVKELDEDKLQSELASGGRPITDTRETDDLGVAEGPAPSIK</sequence>
<keyword id="KW-0997">Cell inner membrane</keyword>
<keyword id="KW-1003">Cell membrane</keyword>
<keyword id="KW-0472">Membrane</keyword>
<keyword id="KW-0769">Symport</keyword>
<keyword id="KW-0812">Transmembrane</keyword>
<keyword id="KW-1133">Transmembrane helix</keyword>
<keyword id="KW-0813">Transport</keyword>
<dbReference type="EMBL" id="CP000076">
    <property type="protein sequence ID" value="AAY93718.2"/>
    <property type="molecule type" value="Genomic_DNA"/>
</dbReference>
<dbReference type="RefSeq" id="WP_011062730.1">
    <property type="nucleotide sequence ID" value="NC_004129.6"/>
</dbReference>
<dbReference type="SMR" id="Q4K878"/>
<dbReference type="STRING" id="220664.PFL_4467"/>
<dbReference type="KEGG" id="pfl:PFL_4467"/>
<dbReference type="PATRIC" id="fig|220664.5.peg.4572"/>
<dbReference type="eggNOG" id="COG1301">
    <property type="taxonomic scope" value="Bacteria"/>
</dbReference>
<dbReference type="HOGENOM" id="CLU_019375_7_0_6"/>
<dbReference type="Proteomes" id="UP000008540">
    <property type="component" value="Chromosome"/>
</dbReference>
<dbReference type="GO" id="GO:0005886">
    <property type="term" value="C:plasma membrane"/>
    <property type="evidence" value="ECO:0007669"/>
    <property type="project" value="UniProtKB-SubCell"/>
</dbReference>
<dbReference type="GO" id="GO:0015138">
    <property type="term" value="F:fumarate transmembrane transporter activity"/>
    <property type="evidence" value="ECO:0007669"/>
    <property type="project" value="TreeGrafter"/>
</dbReference>
<dbReference type="GO" id="GO:0015366">
    <property type="term" value="F:malate:proton symporter activity"/>
    <property type="evidence" value="ECO:0007669"/>
    <property type="project" value="TreeGrafter"/>
</dbReference>
<dbReference type="GO" id="GO:0015141">
    <property type="term" value="F:succinate transmembrane transporter activity"/>
    <property type="evidence" value="ECO:0007669"/>
    <property type="project" value="TreeGrafter"/>
</dbReference>
<dbReference type="GO" id="GO:0070778">
    <property type="term" value="P:L-aspartate transmembrane transport"/>
    <property type="evidence" value="ECO:0007669"/>
    <property type="project" value="TreeGrafter"/>
</dbReference>
<dbReference type="FunFam" id="1.10.3860.10:FF:000001">
    <property type="entry name" value="C4-dicarboxylate transport protein"/>
    <property type="match status" value="1"/>
</dbReference>
<dbReference type="Gene3D" id="1.10.3860.10">
    <property type="entry name" value="Sodium:dicarboxylate symporter"/>
    <property type="match status" value="1"/>
</dbReference>
<dbReference type="HAMAP" id="MF_01300">
    <property type="entry name" value="C4_dicarb_transport"/>
    <property type="match status" value="1"/>
</dbReference>
<dbReference type="InterPro" id="IPR023954">
    <property type="entry name" value="C4_dicarb_transport"/>
</dbReference>
<dbReference type="InterPro" id="IPR001991">
    <property type="entry name" value="Na-dicarboxylate_symporter"/>
</dbReference>
<dbReference type="InterPro" id="IPR018107">
    <property type="entry name" value="Na-dicarboxylate_symporter_CS"/>
</dbReference>
<dbReference type="InterPro" id="IPR036458">
    <property type="entry name" value="Na:dicarbo_symporter_sf"/>
</dbReference>
<dbReference type="NCBIfam" id="NF002461">
    <property type="entry name" value="PRK01663.1"/>
    <property type="match status" value="1"/>
</dbReference>
<dbReference type="NCBIfam" id="NF009587">
    <property type="entry name" value="PRK13027.1"/>
    <property type="match status" value="1"/>
</dbReference>
<dbReference type="PANTHER" id="PTHR42865:SF1">
    <property type="entry name" value="AEROBIC C4-DICARBOXYLATE TRANSPORT PROTEIN"/>
    <property type="match status" value="1"/>
</dbReference>
<dbReference type="PANTHER" id="PTHR42865">
    <property type="entry name" value="PROTON/GLUTAMATE-ASPARTATE SYMPORTER"/>
    <property type="match status" value="1"/>
</dbReference>
<dbReference type="Pfam" id="PF00375">
    <property type="entry name" value="SDF"/>
    <property type="match status" value="1"/>
</dbReference>
<dbReference type="PRINTS" id="PR00173">
    <property type="entry name" value="EDTRNSPORT"/>
</dbReference>
<dbReference type="SUPFAM" id="SSF118215">
    <property type="entry name" value="Proton glutamate symport protein"/>
    <property type="match status" value="1"/>
</dbReference>
<dbReference type="PROSITE" id="PS00713">
    <property type="entry name" value="NA_DICARBOXYL_SYMP_1"/>
    <property type="match status" value="1"/>
</dbReference>
<dbReference type="PROSITE" id="PS00714">
    <property type="entry name" value="NA_DICARBOXYL_SYMP_2"/>
    <property type="match status" value="1"/>
</dbReference>
<reference key="1">
    <citation type="journal article" date="2005" name="Nat. Biotechnol.">
        <title>Complete genome sequence of the plant commensal Pseudomonas fluorescens Pf-5.</title>
        <authorList>
            <person name="Paulsen I.T."/>
            <person name="Press C.M."/>
            <person name="Ravel J."/>
            <person name="Kobayashi D.Y."/>
            <person name="Myers G.S.A."/>
            <person name="Mavrodi D.V."/>
            <person name="DeBoy R.T."/>
            <person name="Seshadri R."/>
            <person name="Ren Q."/>
            <person name="Madupu R."/>
            <person name="Dodson R.J."/>
            <person name="Durkin A.S."/>
            <person name="Brinkac L.M."/>
            <person name="Daugherty S.C."/>
            <person name="Sullivan S.A."/>
            <person name="Rosovitz M.J."/>
            <person name="Gwinn M.L."/>
            <person name="Zhou L."/>
            <person name="Schneider D.J."/>
            <person name="Cartinhour S.W."/>
            <person name="Nelson W.C."/>
            <person name="Weidman J."/>
            <person name="Watkins K."/>
            <person name="Tran K."/>
            <person name="Khouri H."/>
            <person name="Pierson E.A."/>
            <person name="Pierson L.S. III"/>
            <person name="Thomashow L.S."/>
            <person name="Loper J.E."/>
        </authorList>
    </citation>
    <scope>NUCLEOTIDE SEQUENCE [LARGE SCALE GENOMIC DNA]</scope>
    <source>
        <strain>ATCC BAA-477 / NRRL B-23932 / Pf-5</strain>
    </source>
</reference>
<protein>
    <recommendedName>
        <fullName evidence="1">C4-dicarboxylate transport protein</fullName>
    </recommendedName>
</protein>
<accession>Q4K878</accession>
<organism>
    <name type="scientific">Pseudomonas fluorescens (strain ATCC BAA-477 / NRRL B-23932 / Pf-5)</name>
    <dbReference type="NCBI Taxonomy" id="220664"/>
    <lineage>
        <taxon>Bacteria</taxon>
        <taxon>Pseudomonadati</taxon>
        <taxon>Pseudomonadota</taxon>
        <taxon>Gammaproteobacteria</taxon>
        <taxon>Pseudomonadales</taxon>
        <taxon>Pseudomonadaceae</taxon>
        <taxon>Pseudomonas</taxon>
    </lineage>
</organism>
<gene>
    <name evidence="1" type="primary">dctA</name>
    <name type="ordered locus">PFL_4467</name>
</gene>
<feature type="chain" id="PRO_0000321994" description="C4-dicarboxylate transport protein">
    <location>
        <begin position="1"/>
        <end position="443"/>
    </location>
</feature>
<feature type="transmembrane region" description="Helical" evidence="1">
    <location>
        <begin position="10"/>
        <end position="30"/>
    </location>
</feature>
<feature type="transmembrane region" description="Helical" evidence="1">
    <location>
        <begin position="46"/>
        <end position="66"/>
    </location>
</feature>
<feature type="transmembrane region" description="Helical" evidence="1">
    <location>
        <begin position="78"/>
        <end position="98"/>
    </location>
</feature>
<feature type="transmembrane region" description="Helical" evidence="1">
    <location>
        <begin position="130"/>
        <end position="150"/>
    </location>
</feature>
<feature type="transmembrane region" description="Helical" evidence="1">
    <location>
        <begin position="152"/>
        <end position="172"/>
    </location>
</feature>
<feature type="transmembrane region" description="Helical" evidence="1">
    <location>
        <begin position="199"/>
        <end position="219"/>
    </location>
</feature>
<feature type="transmembrane region" description="Helical" evidence="1">
    <location>
        <begin position="224"/>
        <end position="244"/>
    </location>
</feature>
<feature type="transmembrane region" description="Helical" evidence="1">
    <location>
        <begin position="291"/>
        <end position="311"/>
    </location>
</feature>
<feature type="transmembrane region" description="Helical" evidence="1">
    <location>
        <begin position="332"/>
        <end position="352"/>
    </location>
</feature>
<feature type="transmembrane region" description="Helical" evidence="1">
    <location>
        <begin position="354"/>
        <end position="374"/>
    </location>
</feature>
<feature type="region of interest" description="Disordered" evidence="2">
    <location>
        <begin position="415"/>
        <end position="443"/>
    </location>
</feature>
<evidence type="ECO:0000255" key="1">
    <source>
        <dbReference type="HAMAP-Rule" id="MF_01300"/>
    </source>
</evidence>
<evidence type="ECO:0000256" key="2">
    <source>
        <dbReference type="SAM" id="MobiDB-lite"/>
    </source>
</evidence>
<name>DCTA_PSEF5</name>